<comment type="function">
    <text evidence="1">Inhibits voltage-gated ion channels.</text>
</comment>
<comment type="subcellular location">
    <subcellularLocation>
        <location evidence="1">Secreted</location>
    </subcellularLocation>
</comment>
<comment type="tissue specificity">
    <text>Expressed by the venom duct.</text>
</comment>
<comment type="developmental stage">
    <text evidence="3">Only expressed in adults.</text>
</comment>
<comment type="domain">
    <text evidence="1">The presence of a 'disulfide through disulfide knot' structurally defines this protein as a knottin.</text>
</comment>
<comment type="domain">
    <text>The cysteine framework is VI/VII (C-C-CC-C-C).</text>
</comment>
<comment type="similarity">
    <text evidence="4">Belongs to the conotoxin O2 superfamily.</text>
</comment>
<dbReference type="EMBL" id="JF433905">
    <property type="protein sequence ID" value="AEA35361.1"/>
    <property type="molecule type" value="mRNA"/>
</dbReference>
<dbReference type="ConoServer" id="4273">
    <property type="toxin name" value="Vc6.12 precursor"/>
</dbReference>
<dbReference type="GO" id="GO:0005576">
    <property type="term" value="C:extracellular region"/>
    <property type="evidence" value="ECO:0007669"/>
    <property type="project" value="UniProtKB-SubCell"/>
</dbReference>
<dbReference type="GO" id="GO:0008200">
    <property type="term" value="F:ion channel inhibitor activity"/>
    <property type="evidence" value="ECO:0007669"/>
    <property type="project" value="InterPro"/>
</dbReference>
<dbReference type="GO" id="GO:0090729">
    <property type="term" value="F:toxin activity"/>
    <property type="evidence" value="ECO:0007669"/>
    <property type="project" value="UniProtKB-KW"/>
</dbReference>
<dbReference type="InterPro" id="IPR004214">
    <property type="entry name" value="Conotoxin"/>
</dbReference>
<dbReference type="Pfam" id="PF02950">
    <property type="entry name" value="Conotoxin"/>
    <property type="match status" value="1"/>
</dbReference>
<protein>
    <recommendedName>
        <fullName>Conotoxin Vc6.12</fullName>
    </recommendedName>
</protein>
<feature type="signal peptide" evidence="2">
    <location>
        <begin position="1"/>
        <end position="19"/>
    </location>
</feature>
<feature type="propeptide" id="PRO_0000425173" evidence="1">
    <location>
        <begin position="20"/>
        <end position="43"/>
    </location>
</feature>
<feature type="peptide" id="PRO_0000425174" description="Conotoxin Vc6.12">
    <location>
        <begin position="47"/>
        <end position="71"/>
    </location>
</feature>
<feature type="disulfide bond" evidence="1">
    <location>
        <begin position="48"/>
        <end position="62"/>
    </location>
</feature>
<feature type="disulfide bond" evidence="1">
    <location>
        <begin position="55"/>
        <end position="66"/>
    </location>
</feature>
<feature type="disulfide bond" evidence="1">
    <location>
        <begin position="61"/>
        <end position="70"/>
    </location>
</feature>
<organism>
    <name type="scientific">Conus victoriae</name>
    <name type="common">Queen Victoria cone</name>
    <dbReference type="NCBI Taxonomy" id="319920"/>
    <lineage>
        <taxon>Eukaryota</taxon>
        <taxon>Metazoa</taxon>
        <taxon>Spiralia</taxon>
        <taxon>Lophotrochozoa</taxon>
        <taxon>Mollusca</taxon>
        <taxon>Gastropoda</taxon>
        <taxon>Caenogastropoda</taxon>
        <taxon>Neogastropoda</taxon>
        <taxon>Conoidea</taxon>
        <taxon>Conidae</taxon>
        <taxon>Conus</taxon>
        <taxon>Cylinder</taxon>
    </lineage>
</organism>
<accession>G1AS78</accession>
<name>O26C_CONVC</name>
<sequence length="71" mass="8248">MQKLIILLLVAAVLMSTQALFQEKRPMKKINFLSKGKTDAEKQRKRSCSDDWQYCEYPHDCCSWSCDVVCS</sequence>
<keyword id="KW-0165">Cleavage on pair of basic residues</keyword>
<keyword id="KW-1015">Disulfide bond</keyword>
<keyword id="KW-0872">Ion channel impairing toxin</keyword>
<keyword id="KW-0960">Knottin</keyword>
<keyword id="KW-0964">Secreted</keyword>
<keyword id="KW-0732">Signal</keyword>
<keyword id="KW-0800">Toxin</keyword>
<evidence type="ECO:0000250" key="1"/>
<evidence type="ECO:0000255" key="2"/>
<evidence type="ECO:0000269" key="3">
    <source>
    </source>
</evidence>
<evidence type="ECO:0000305" key="4"/>
<proteinExistence type="evidence at transcript level"/>
<reference key="1">
    <citation type="journal article" date="2011" name="J. Biol. Chem.">
        <title>Embryonic toxin expression in the cone snail Conus victoriae: primed to kill or divergent function?</title>
        <authorList>
            <person name="Safavi-Hemami H."/>
            <person name="Siero W.A."/>
            <person name="Kuang Z."/>
            <person name="Williamson N.A."/>
            <person name="Karas J.A."/>
            <person name="Page L.R."/>
            <person name="Macmillan D."/>
            <person name="Callaghan B."/>
            <person name="Kompella S.N."/>
            <person name="Adams D.J."/>
            <person name="Norton R.S."/>
            <person name="Purcell A.W."/>
        </authorList>
    </citation>
    <scope>NUCLEOTIDE SEQUENCE [MRNA]</scope>
    <scope>DEVELOPMENTAL STAGE</scope>
    <source>
        <tissue>Embryo</tissue>
        <tissue>Venom duct</tissue>
    </source>
</reference>